<feature type="chain" id="PRO_0000055924" description="E3 ubiquitin-protein ligase LRSAM1">
    <location>
        <begin position="1"/>
        <end position="727"/>
    </location>
</feature>
<feature type="repeat" description="LRR 1">
    <location>
        <begin position="30"/>
        <end position="51"/>
    </location>
</feature>
<feature type="repeat" description="LRR 2">
    <location>
        <begin position="56"/>
        <end position="77"/>
    </location>
</feature>
<feature type="repeat" description="LRR 3">
    <location>
        <begin position="82"/>
        <end position="103"/>
    </location>
</feature>
<feature type="repeat" description="LRR 4">
    <location>
        <begin position="105"/>
        <end position="126"/>
    </location>
</feature>
<feature type="repeat" description="LRR 5">
    <location>
        <begin position="128"/>
        <end position="150"/>
    </location>
</feature>
<feature type="repeat" description="LRR 6">
    <location>
        <begin position="151"/>
        <end position="172"/>
    </location>
</feature>
<feature type="domain" description="SAM" evidence="4">
    <location>
        <begin position="569"/>
        <end position="632"/>
    </location>
</feature>
<feature type="zinc finger region" description="RING-type" evidence="3">
    <location>
        <begin position="679"/>
        <end position="714"/>
    </location>
</feature>
<feature type="region of interest" description="Disordered" evidence="5">
    <location>
        <begin position="227"/>
        <end position="248"/>
    </location>
</feature>
<feature type="coiled-coil region" evidence="2">
    <location>
        <begin position="241"/>
        <end position="382"/>
    </location>
</feature>
<feature type="coiled-coil region" evidence="2">
    <location>
        <begin position="469"/>
        <end position="547"/>
    </location>
</feature>
<feature type="short sequence motif" description="PTAP motif 1">
    <location>
        <begin position="653"/>
        <end position="656"/>
    </location>
</feature>
<feature type="short sequence motif" description="PTAP motif 2">
    <location>
        <begin position="665"/>
        <end position="668"/>
    </location>
</feature>
<feature type="modified residue" description="Phosphoserine" evidence="1">
    <location>
        <position position="234"/>
    </location>
</feature>
<feature type="modified residue" description="Phosphoserine" evidence="1">
    <location>
        <position position="604"/>
    </location>
</feature>
<accession>Q80ZI6</accession>
<organism>
    <name type="scientific">Mus musculus</name>
    <name type="common">Mouse</name>
    <dbReference type="NCBI Taxonomy" id="10090"/>
    <lineage>
        <taxon>Eukaryota</taxon>
        <taxon>Metazoa</taxon>
        <taxon>Chordata</taxon>
        <taxon>Craniata</taxon>
        <taxon>Vertebrata</taxon>
        <taxon>Euteleostomi</taxon>
        <taxon>Mammalia</taxon>
        <taxon>Eutheria</taxon>
        <taxon>Euarchontoglires</taxon>
        <taxon>Glires</taxon>
        <taxon>Rodentia</taxon>
        <taxon>Myomorpha</taxon>
        <taxon>Muroidea</taxon>
        <taxon>Muridae</taxon>
        <taxon>Murinae</taxon>
        <taxon>Mus</taxon>
        <taxon>Mus</taxon>
    </lineage>
</organism>
<gene>
    <name evidence="1" type="primary">Lrsam1</name>
</gene>
<reference key="1">
    <citation type="journal article" date="2004" name="Genome Res.">
        <title>The status, quality, and expansion of the NIH full-length cDNA project: the Mammalian Gene Collection (MGC).</title>
        <authorList>
            <consortium name="The MGC Project Team"/>
        </authorList>
    </citation>
    <scope>NUCLEOTIDE SEQUENCE [LARGE SCALE MRNA]</scope>
    <source>
        <tissue>Olfactory epithelium</tissue>
    </source>
</reference>
<reference key="2">
    <citation type="journal article" date="2004" name="Genes Dev.">
        <title>Tal, a Tsg101-specific E3 ubiquitin ligase, regulates receptor endocytosis and retrovirus budding.</title>
        <authorList>
            <person name="Amit I."/>
            <person name="Yakir L."/>
            <person name="Katz M."/>
            <person name="Zwang Y."/>
            <person name="Marmor M.D."/>
            <person name="Citri A."/>
            <person name="Shtiegman K."/>
            <person name="Alroy I."/>
            <person name="Tuvia S."/>
            <person name="Reiss Y."/>
            <person name="Roubini E."/>
            <person name="Cohen M."/>
            <person name="Wides R."/>
            <person name="Bacharach E."/>
            <person name="Schubert U."/>
            <person name="Yarden Y."/>
        </authorList>
    </citation>
    <scope>TISSUE SPECIFICITY</scope>
</reference>
<reference key="3">
    <citation type="journal article" date="2010" name="Cell">
        <title>A tissue-specific atlas of mouse protein phosphorylation and expression.</title>
        <authorList>
            <person name="Huttlin E.L."/>
            <person name="Jedrychowski M.P."/>
            <person name="Elias J.E."/>
            <person name="Goswami T."/>
            <person name="Rad R."/>
            <person name="Beausoleil S.A."/>
            <person name="Villen J."/>
            <person name="Haas W."/>
            <person name="Sowa M.E."/>
            <person name="Gygi S.P."/>
        </authorList>
    </citation>
    <scope>IDENTIFICATION BY MASS SPECTROMETRY [LARGE SCALE ANALYSIS]</scope>
    <source>
        <tissue>Brain</tissue>
    </source>
</reference>
<dbReference type="EC" id="2.3.2.27" evidence="1"/>
<dbReference type="EMBL" id="BC049146">
    <property type="protein sequence ID" value="AAH49146.1"/>
    <property type="molecule type" value="mRNA"/>
</dbReference>
<dbReference type="CCDS" id="CCDS15935.1"/>
<dbReference type="RefSeq" id="NP_001366368.1">
    <property type="nucleotide sequence ID" value="NM_001379439.1"/>
</dbReference>
<dbReference type="RefSeq" id="NP_001366369.1">
    <property type="nucleotide sequence ID" value="NM_001379440.1"/>
</dbReference>
<dbReference type="RefSeq" id="NP_001396927.1">
    <property type="nucleotide sequence ID" value="NM_001409998.1"/>
</dbReference>
<dbReference type="RefSeq" id="NP_001396928.1">
    <property type="nucleotide sequence ID" value="NM_001409999.1"/>
</dbReference>
<dbReference type="RefSeq" id="NP_001396929.1">
    <property type="nucleotide sequence ID" value="NM_001410000.1"/>
</dbReference>
<dbReference type="RefSeq" id="NP_001396930.1">
    <property type="nucleotide sequence ID" value="NM_001410001.1"/>
</dbReference>
<dbReference type="RefSeq" id="NP_001396931.1">
    <property type="nucleotide sequence ID" value="NM_001410002.1"/>
</dbReference>
<dbReference type="RefSeq" id="NP_955006.1">
    <property type="nucleotide sequence ID" value="NM_199302.3"/>
</dbReference>
<dbReference type="RefSeq" id="XP_006498032.1">
    <property type="nucleotide sequence ID" value="XM_006497969.3"/>
</dbReference>
<dbReference type="RefSeq" id="XP_006498033.1">
    <property type="nucleotide sequence ID" value="XM_006497970.3"/>
</dbReference>
<dbReference type="RefSeq" id="XP_006498034.1">
    <property type="nucleotide sequence ID" value="XM_006497971.3"/>
</dbReference>
<dbReference type="RefSeq" id="XP_006498035.1">
    <property type="nucleotide sequence ID" value="XM_006497972.3"/>
</dbReference>
<dbReference type="SMR" id="Q80ZI6"/>
<dbReference type="BioGRID" id="230680">
    <property type="interactions" value="4"/>
</dbReference>
<dbReference type="FunCoup" id="Q80ZI6">
    <property type="interactions" value="1280"/>
</dbReference>
<dbReference type="IntAct" id="Q80ZI6">
    <property type="interactions" value="2"/>
</dbReference>
<dbReference type="STRING" id="10090.ENSMUSP00000108825"/>
<dbReference type="iPTMnet" id="Q80ZI6"/>
<dbReference type="PhosphoSitePlus" id="Q80ZI6"/>
<dbReference type="SwissPalm" id="Q80ZI6"/>
<dbReference type="PaxDb" id="10090-ENSMUSP00000108825"/>
<dbReference type="PeptideAtlas" id="Q80ZI6"/>
<dbReference type="ProteomicsDB" id="292118"/>
<dbReference type="Pumba" id="Q80ZI6"/>
<dbReference type="Antibodypedia" id="16985">
    <property type="antibodies" value="171 antibodies from 27 providers"/>
</dbReference>
<dbReference type="DNASU" id="227738"/>
<dbReference type="Ensembl" id="ENSMUST00000028132.14">
    <property type="protein sequence ID" value="ENSMUSP00000028132.8"/>
    <property type="gene ID" value="ENSMUSG00000026792.17"/>
</dbReference>
<dbReference type="Ensembl" id="ENSMUST00000113200.8">
    <property type="protein sequence ID" value="ENSMUSP00000108825.2"/>
    <property type="gene ID" value="ENSMUSG00000026792.17"/>
</dbReference>
<dbReference type="GeneID" id="227738"/>
<dbReference type="KEGG" id="mmu:227738"/>
<dbReference type="UCSC" id="uc008jhd.2">
    <property type="organism name" value="mouse"/>
</dbReference>
<dbReference type="AGR" id="MGI:2684789"/>
<dbReference type="CTD" id="90678"/>
<dbReference type="MGI" id="MGI:2684789">
    <property type="gene designation" value="Lrsam1"/>
</dbReference>
<dbReference type="VEuPathDB" id="HostDB:ENSMUSG00000026792"/>
<dbReference type="eggNOG" id="KOG0619">
    <property type="taxonomic scope" value="Eukaryota"/>
</dbReference>
<dbReference type="GeneTree" id="ENSGT00930000151044"/>
<dbReference type="HOGENOM" id="CLU_022990_0_0_1"/>
<dbReference type="InParanoid" id="Q80ZI6"/>
<dbReference type="OMA" id="LWCSSEC"/>
<dbReference type="OrthoDB" id="1711136at2759"/>
<dbReference type="PhylomeDB" id="Q80ZI6"/>
<dbReference type="TreeFam" id="TF329645"/>
<dbReference type="Reactome" id="R-MMU-983168">
    <property type="pathway name" value="Antigen processing: Ubiquitination &amp; Proteasome degradation"/>
</dbReference>
<dbReference type="UniPathway" id="UPA00143"/>
<dbReference type="BioGRID-ORCS" id="227738">
    <property type="hits" value="2 hits in 78 CRISPR screens"/>
</dbReference>
<dbReference type="ChiTaRS" id="Lrsam1">
    <property type="organism name" value="mouse"/>
</dbReference>
<dbReference type="PRO" id="PR:Q80ZI6"/>
<dbReference type="Proteomes" id="UP000000589">
    <property type="component" value="Chromosome 2"/>
</dbReference>
<dbReference type="RNAct" id="Q80ZI6">
    <property type="molecule type" value="protein"/>
</dbReference>
<dbReference type="Bgee" id="ENSMUSG00000026792">
    <property type="expression patterns" value="Expressed in embryonic brain and 76 other cell types or tissues"/>
</dbReference>
<dbReference type="ExpressionAtlas" id="Q80ZI6">
    <property type="expression patterns" value="baseline and differential"/>
</dbReference>
<dbReference type="GO" id="GO:0005737">
    <property type="term" value="C:cytoplasm"/>
    <property type="evidence" value="ECO:0000250"/>
    <property type="project" value="UniProtKB"/>
</dbReference>
<dbReference type="GO" id="GO:0005829">
    <property type="term" value="C:cytosol"/>
    <property type="evidence" value="ECO:0007669"/>
    <property type="project" value="Ensembl"/>
</dbReference>
<dbReference type="GO" id="GO:0016020">
    <property type="term" value="C:membrane"/>
    <property type="evidence" value="ECO:0000250"/>
    <property type="project" value="UniProtKB"/>
</dbReference>
<dbReference type="GO" id="GO:0061630">
    <property type="term" value="F:ubiquitin protein ligase activity"/>
    <property type="evidence" value="ECO:0000250"/>
    <property type="project" value="GO_Central"/>
</dbReference>
<dbReference type="GO" id="GO:0004842">
    <property type="term" value="F:ubiquitin-protein transferase activity"/>
    <property type="evidence" value="ECO:0000250"/>
    <property type="project" value="UniProtKB"/>
</dbReference>
<dbReference type="GO" id="GO:0008270">
    <property type="term" value="F:zinc ion binding"/>
    <property type="evidence" value="ECO:0007669"/>
    <property type="project" value="UniProtKB-KW"/>
</dbReference>
<dbReference type="GO" id="GO:0006914">
    <property type="term" value="P:autophagy"/>
    <property type="evidence" value="ECO:0007669"/>
    <property type="project" value="UniProtKB-KW"/>
</dbReference>
<dbReference type="GO" id="GO:0045806">
    <property type="term" value="P:negative regulation of endocytosis"/>
    <property type="evidence" value="ECO:0000250"/>
    <property type="project" value="UniProtKB"/>
</dbReference>
<dbReference type="GO" id="GO:2000786">
    <property type="term" value="P:positive regulation of autophagosome assembly"/>
    <property type="evidence" value="ECO:0000250"/>
    <property type="project" value="GO_Central"/>
</dbReference>
<dbReference type="GO" id="GO:1904417">
    <property type="term" value="P:positive regulation of xenophagy"/>
    <property type="evidence" value="ECO:0000250"/>
    <property type="project" value="GO_Central"/>
</dbReference>
<dbReference type="GO" id="GO:0051865">
    <property type="term" value="P:protein autoubiquitination"/>
    <property type="evidence" value="ECO:0000250"/>
    <property type="project" value="UniProtKB"/>
</dbReference>
<dbReference type="GO" id="GO:0030163">
    <property type="term" value="P:protein catabolic process"/>
    <property type="evidence" value="ECO:0000250"/>
    <property type="project" value="UniProtKB"/>
</dbReference>
<dbReference type="GO" id="GO:0000209">
    <property type="term" value="P:protein polyubiquitination"/>
    <property type="evidence" value="ECO:0000250"/>
    <property type="project" value="UniProtKB"/>
</dbReference>
<dbReference type="GO" id="GO:0070086">
    <property type="term" value="P:ubiquitin-dependent endocytosis"/>
    <property type="evidence" value="ECO:0000250"/>
    <property type="project" value="UniProtKB"/>
</dbReference>
<dbReference type="GO" id="GO:0046755">
    <property type="term" value="P:viral budding"/>
    <property type="evidence" value="ECO:0000250"/>
    <property type="project" value="UniProtKB"/>
</dbReference>
<dbReference type="CDD" id="cd16515">
    <property type="entry name" value="RING-HC_LRSAM1"/>
    <property type="match status" value="1"/>
</dbReference>
<dbReference type="CDD" id="cd09523">
    <property type="entry name" value="SAM_TAL"/>
    <property type="match status" value="1"/>
</dbReference>
<dbReference type="FunFam" id="3.30.40.10:FF:000252">
    <property type="entry name" value="E3 ubiquitin-protein ligase LRSAM1 isoform 1"/>
    <property type="match status" value="1"/>
</dbReference>
<dbReference type="FunFam" id="3.80.10.10:FF:000174">
    <property type="entry name" value="E3 ubiquitin-protein ligase LRSAM1 isoform 1"/>
    <property type="match status" value="1"/>
</dbReference>
<dbReference type="FunFam" id="1.10.150.50:FF:000059">
    <property type="entry name" value="E3 ubiquitin-protein ligase LRSAM1 isoform X1"/>
    <property type="match status" value="1"/>
</dbReference>
<dbReference type="Gene3D" id="3.80.10.10">
    <property type="entry name" value="Ribonuclease Inhibitor"/>
    <property type="match status" value="1"/>
</dbReference>
<dbReference type="Gene3D" id="1.10.150.50">
    <property type="entry name" value="Transcription Factor, Ets-1"/>
    <property type="match status" value="1"/>
</dbReference>
<dbReference type="Gene3D" id="3.30.40.10">
    <property type="entry name" value="Zinc/RING finger domain, C3HC4 (zinc finger)"/>
    <property type="match status" value="1"/>
</dbReference>
<dbReference type="InterPro" id="IPR001611">
    <property type="entry name" value="Leu-rich_rpt"/>
</dbReference>
<dbReference type="InterPro" id="IPR003591">
    <property type="entry name" value="Leu-rich_rpt_typical-subtyp"/>
</dbReference>
<dbReference type="InterPro" id="IPR032675">
    <property type="entry name" value="LRR_dom_sf"/>
</dbReference>
<dbReference type="InterPro" id="IPR050216">
    <property type="entry name" value="LRR_domain-containing"/>
</dbReference>
<dbReference type="InterPro" id="IPR001660">
    <property type="entry name" value="SAM"/>
</dbReference>
<dbReference type="InterPro" id="IPR013761">
    <property type="entry name" value="SAM/pointed_sf"/>
</dbReference>
<dbReference type="InterPro" id="IPR001841">
    <property type="entry name" value="Znf_RING"/>
</dbReference>
<dbReference type="InterPro" id="IPR013083">
    <property type="entry name" value="Znf_RING/FYVE/PHD"/>
</dbReference>
<dbReference type="PANTHER" id="PTHR48051">
    <property type="match status" value="1"/>
</dbReference>
<dbReference type="PANTHER" id="PTHR48051:SF47">
    <property type="entry name" value="LEUCINE RICH REPEAT AND STERILE ALPHA MOTIF CONTAINING 1"/>
    <property type="match status" value="1"/>
</dbReference>
<dbReference type="Pfam" id="PF13855">
    <property type="entry name" value="LRR_8"/>
    <property type="match status" value="1"/>
</dbReference>
<dbReference type="Pfam" id="PF07647">
    <property type="entry name" value="SAM_2"/>
    <property type="match status" value="1"/>
</dbReference>
<dbReference type="Pfam" id="PF13920">
    <property type="entry name" value="zf-C3HC4_3"/>
    <property type="match status" value="1"/>
</dbReference>
<dbReference type="SMART" id="SM00364">
    <property type="entry name" value="LRR_BAC"/>
    <property type="match status" value="4"/>
</dbReference>
<dbReference type="SMART" id="SM00369">
    <property type="entry name" value="LRR_TYP"/>
    <property type="match status" value="4"/>
</dbReference>
<dbReference type="SUPFAM" id="SSF52058">
    <property type="entry name" value="L domain-like"/>
    <property type="match status" value="1"/>
</dbReference>
<dbReference type="SUPFAM" id="SSF57850">
    <property type="entry name" value="RING/U-box"/>
    <property type="match status" value="1"/>
</dbReference>
<dbReference type="SUPFAM" id="SSF47769">
    <property type="entry name" value="SAM/Pointed domain"/>
    <property type="match status" value="1"/>
</dbReference>
<dbReference type="PROSITE" id="PS51450">
    <property type="entry name" value="LRR"/>
    <property type="match status" value="4"/>
</dbReference>
<dbReference type="PROSITE" id="PS50105">
    <property type="entry name" value="SAM_DOMAIN"/>
    <property type="match status" value="1"/>
</dbReference>
<dbReference type="PROSITE" id="PS50089">
    <property type="entry name" value="ZF_RING_2"/>
    <property type="match status" value="1"/>
</dbReference>
<sequence length="727" mass="83976">MPLFFRKRKPSEEARKRLEYQMCLAKEAGADDILDISKCELSEIPFGAFATCKVLQKKVLIVHTNHLTSLLPKSCSLLSLVTIKVLDLHENQLTALPDDMGQLTVLQVLNVERNQLTHLPRSIGNLLQLQTLNVKDNKLKELPDTLGELRSLRTLDISENEIQRLPQMLAHVRTLETLSLNALAMVYPPPEVCGAGTAAVQQFLCKESGLDYYPPSQYLLPVLEQDGAENTQDSPDGPASRFSREEAEWQNRFSDYEKRKEQKMLEKLEFERRLDLGQREHAELLQQSHSHKDEILQTVKQEQTRLEQDLSERQRCLDAERQQLQEQLKQTEQSIASRIQRLLQDNQRQKKSSEILKSLENERIRMEQLMSITQEETENLRQREIAAAMQQMLTESCKSRLIQMAYESQRQSLAQQACSSMAEMDKRFQQILSWQQMDQNKAISQILQESVMQKAAFEALQVKKDLMHRQIRNQIRLIETELLQLTQLELKRKSLDTETLQEMVSEQRWALSNLLQQLLKEKKQREEELHGILAELEAKSETKQENYWLIQYQRLLNQKPLSLKLQEEGMERRLVALLVELSAEHYLPLFAHHRISLDMLSRMSPGDLAKVGVSEAGLQHEILRRAQDLLAVPRVQPELKPLENEVLGALEPPTAPRELQESVRPSAPPAELDMPTSECVVCLEREAQMVFLTCGHVCCCQQCCQPLRTCPLCRQEISQRLRIYHSS</sequence>
<proteinExistence type="evidence at protein level"/>
<comment type="function">
    <text evidence="1">E3 ubiquitin-protein ligase that mediates monoubiquitination of TSG101 at multiple sites, leading to inactivate the ability of TSG101 to sort endocytic (EGF receptors) and exocytic (viral proteins) cargos (By similarity). Bacterial recognition protein that defends the cytoplasm from invasive pathogens (By similarity). Localizes to several intracellular bacterial pathogens and generates the bacteria-associated ubiquitin signal leading to autophagy-mediated intracellular bacteria degradation (xenophagy) (By similarity).</text>
</comment>
<comment type="catalytic activity">
    <reaction evidence="1">
        <text>S-ubiquitinyl-[E2 ubiquitin-conjugating enzyme]-L-cysteine + [acceptor protein]-L-lysine = [E2 ubiquitin-conjugating enzyme]-L-cysteine + N(6)-ubiquitinyl-[acceptor protein]-L-lysine.</text>
        <dbReference type="EC" id="2.3.2.27"/>
    </reaction>
</comment>
<comment type="pathway">
    <text evidence="1">Protein modification; protein ubiquitination.</text>
</comment>
<comment type="subunit">
    <text evidence="1">Interacts with TSG101. Interacts with PHF23. Interacts with FUS.</text>
</comment>
<comment type="subcellular location">
    <subcellularLocation>
        <location evidence="1">Cytoplasm</location>
    </subcellularLocation>
    <text evidence="1">Displays a punctuate distribution and localizes to a submembranal ring (PubMed:15256501). Localizes to intracellular bacterial pathogens (By similarity).</text>
</comment>
<comment type="tissue specificity">
    <text evidence="6">Widely expressed.</text>
</comment>
<comment type="domain">
    <text evidence="1">The coiled coil domains interact with the SB domain of TSG101.</text>
</comment>
<comment type="domain">
    <text evidence="1">The PTAP motifs mediate the binding to UEV domains.</text>
</comment>
<comment type="domain">
    <text evidence="1">The LRR domain is necessary and sufficient for localization to bacterial targets.</text>
</comment>
<comment type="domain">
    <text evidence="1">The RING domain is required for ubiquitination.</text>
</comment>
<comment type="PTM">
    <text evidence="1">Ubiquitination promoted by PHF23 leads to proteasomal degradation.</text>
</comment>
<evidence type="ECO:0000250" key="1">
    <source>
        <dbReference type="UniProtKB" id="Q6UWE0"/>
    </source>
</evidence>
<evidence type="ECO:0000255" key="2"/>
<evidence type="ECO:0000255" key="3">
    <source>
        <dbReference type="PROSITE-ProRule" id="PRU00175"/>
    </source>
</evidence>
<evidence type="ECO:0000255" key="4">
    <source>
        <dbReference type="PROSITE-ProRule" id="PRU00184"/>
    </source>
</evidence>
<evidence type="ECO:0000256" key="5">
    <source>
        <dbReference type="SAM" id="MobiDB-lite"/>
    </source>
</evidence>
<evidence type="ECO:0000269" key="6">
    <source>
    </source>
</evidence>
<evidence type="ECO:0000305" key="7"/>
<protein>
    <recommendedName>
        <fullName evidence="1">E3 ubiquitin-protein ligase LRSAM1</fullName>
        <ecNumber evidence="1">2.3.2.27</ecNumber>
    </recommendedName>
    <alternativeName>
        <fullName evidence="1">Leucine-rich repeat and sterile alpha motif-containing protein 1</fullName>
    </alternativeName>
    <alternativeName>
        <fullName evidence="7">RING-type E3 ubiquitin transferase LRSAM1</fullName>
    </alternativeName>
    <alternativeName>
        <fullName evidence="1">Tsg101-associated ligase</fullName>
    </alternativeName>
</protein>
<name>LRSM1_MOUSE</name>
<keyword id="KW-0072">Autophagy</keyword>
<keyword id="KW-0175">Coiled coil</keyword>
<keyword id="KW-0963">Cytoplasm</keyword>
<keyword id="KW-0433">Leucine-rich repeat</keyword>
<keyword id="KW-0479">Metal-binding</keyword>
<keyword id="KW-0597">Phosphoprotein</keyword>
<keyword id="KW-0653">Protein transport</keyword>
<keyword id="KW-1185">Reference proteome</keyword>
<keyword id="KW-0677">Repeat</keyword>
<keyword id="KW-0808">Transferase</keyword>
<keyword id="KW-0813">Transport</keyword>
<keyword id="KW-0832">Ubl conjugation</keyword>
<keyword id="KW-0833">Ubl conjugation pathway</keyword>
<keyword id="KW-0862">Zinc</keyword>
<keyword id="KW-0863">Zinc-finger</keyword>